<accession>Q9Z0U9</accession>
<accession>Q8BP20</accession>
<reference key="1">
    <citation type="journal article" date="1999" name="Gene">
        <title>Comparative analysis of three murine G-protein coupled receptors activated by sphingosine-1-phosphate.</title>
        <authorList>
            <person name="Zhang G."/>
            <person name="Contos J.J.A."/>
            <person name="Weiner J.A."/>
            <person name="Fukushima N."/>
            <person name="Chun J."/>
        </authorList>
    </citation>
    <scope>NUCLEOTIDE SEQUENCE [GENOMIC DNA]</scope>
    <scope>TISSUE SPECIFICITY</scope>
    <source>
        <strain>129/SvJ</strain>
    </source>
</reference>
<reference key="2">
    <citation type="journal article" date="2005" name="Science">
        <title>The transcriptional landscape of the mammalian genome.</title>
        <authorList>
            <person name="Carninci P."/>
            <person name="Kasukawa T."/>
            <person name="Katayama S."/>
            <person name="Gough J."/>
            <person name="Frith M.C."/>
            <person name="Maeda N."/>
            <person name="Oyama R."/>
            <person name="Ravasi T."/>
            <person name="Lenhard B."/>
            <person name="Wells C."/>
            <person name="Kodzius R."/>
            <person name="Shimokawa K."/>
            <person name="Bajic V.B."/>
            <person name="Brenner S.E."/>
            <person name="Batalov S."/>
            <person name="Forrest A.R."/>
            <person name="Zavolan M."/>
            <person name="Davis M.J."/>
            <person name="Wilming L.G."/>
            <person name="Aidinis V."/>
            <person name="Allen J.E."/>
            <person name="Ambesi-Impiombato A."/>
            <person name="Apweiler R."/>
            <person name="Aturaliya R.N."/>
            <person name="Bailey T.L."/>
            <person name="Bansal M."/>
            <person name="Baxter L."/>
            <person name="Beisel K.W."/>
            <person name="Bersano T."/>
            <person name="Bono H."/>
            <person name="Chalk A.M."/>
            <person name="Chiu K.P."/>
            <person name="Choudhary V."/>
            <person name="Christoffels A."/>
            <person name="Clutterbuck D.R."/>
            <person name="Crowe M.L."/>
            <person name="Dalla E."/>
            <person name="Dalrymple B.P."/>
            <person name="de Bono B."/>
            <person name="Della Gatta G."/>
            <person name="di Bernardo D."/>
            <person name="Down T."/>
            <person name="Engstrom P."/>
            <person name="Fagiolini M."/>
            <person name="Faulkner G."/>
            <person name="Fletcher C.F."/>
            <person name="Fukushima T."/>
            <person name="Furuno M."/>
            <person name="Futaki S."/>
            <person name="Gariboldi M."/>
            <person name="Georgii-Hemming P."/>
            <person name="Gingeras T.R."/>
            <person name="Gojobori T."/>
            <person name="Green R.E."/>
            <person name="Gustincich S."/>
            <person name="Harbers M."/>
            <person name="Hayashi Y."/>
            <person name="Hensch T.K."/>
            <person name="Hirokawa N."/>
            <person name="Hill D."/>
            <person name="Huminiecki L."/>
            <person name="Iacono M."/>
            <person name="Ikeo K."/>
            <person name="Iwama A."/>
            <person name="Ishikawa T."/>
            <person name="Jakt M."/>
            <person name="Kanapin A."/>
            <person name="Katoh M."/>
            <person name="Kawasawa Y."/>
            <person name="Kelso J."/>
            <person name="Kitamura H."/>
            <person name="Kitano H."/>
            <person name="Kollias G."/>
            <person name="Krishnan S.P."/>
            <person name="Kruger A."/>
            <person name="Kummerfeld S.K."/>
            <person name="Kurochkin I.V."/>
            <person name="Lareau L.F."/>
            <person name="Lazarevic D."/>
            <person name="Lipovich L."/>
            <person name="Liu J."/>
            <person name="Liuni S."/>
            <person name="McWilliam S."/>
            <person name="Madan Babu M."/>
            <person name="Madera M."/>
            <person name="Marchionni L."/>
            <person name="Matsuda H."/>
            <person name="Matsuzawa S."/>
            <person name="Miki H."/>
            <person name="Mignone F."/>
            <person name="Miyake S."/>
            <person name="Morris K."/>
            <person name="Mottagui-Tabar S."/>
            <person name="Mulder N."/>
            <person name="Nakano N."/>
            <person name="Nakauchi H."/>
            <person name="Ng P."/>
            <person name="Nilsson R."/>
            <person name="Nishiguchi S."/>
            <person name="Nishikawa S."/>
            <person name="Nori F."/>
            <person name="Ohara O."/>
            <person name="Okazaki Y."/>
            <person name="Orlando V."/>
            <person name="Pang K.C."/>
            <person name="Pavan W.J."/>
            <person name="Pavesi G."/>
            <person name="Pesole G."/>
            <person name="Petrovsky N."/>
            <person name="Piazza S."/>
            <person name="Reed J."/>
            <person name="Reid J.F."/>
            <person name="Ring B.Z."/>
            <person name="Ringwald M."/>
            <person name="Rost B."/>
            <person name="Ruan Y."/>
            <person name="Salzberg S.L."/>
            <person name="Sandelin A."/>
            <person name="Schneider C."/>
            <person name="Schoenbach C."/>
            <person name="Sekiguchi K."/>
            <person name="Semple C.A."/>
            <person name="Seno S."/>
            <person name="Sessa L."/>
            <person name="Sheng Y."/>
            <person name="Shibata Y."/>
            <person name="Shimada H."/>
            <person name="Shimada K."/>
            <person name="Silva D."/>
            <person name="Sinclair B."/>
            <person name="Sperling S."/>
            <person name="Stupka E."/>
            <person name="Sugiura K."/>
            <person name="Sultana R."/>
            <person name="Takenaka Y."/>
            <person name="Taki K."/>
            <person name="Tammoja K."/>
            <person name="Tan S.L."/>
            <person name="Tang S."/>
            <person name="Taylor M.S."/>
            <person name="Tegner J."/>
            <person name="Teichmann S.A."/>
            <person name="Ueda H.R."/>
            <person name="van Nimwegen E."/>
            <person name="Verardo R."/>
            <person name="Wei C.L."/>
            <person name="Yagi K."/>
            <person name="Yamanishi H."/>
            <person name="Zabarovsky E."/>
            <person name="Zhu S."/>
            <person name="Zimmer A."/>
            <person name="Hide W."/>
            <person name="Bult C."/>
            <person name="Grimmond S.M."/>
            <person name="Teasdale R.D."/>
            <person name="Liu E.T."/>
            <person name="Brusic V."/>
            <person name="Quackenbush J."/>
            <person name="Wahlestedt C."/>
            <person name="Mattick J.S."/>
            <person name="Hume D.A."/>
            <person name="Kai C."/>
            <person name="Sasaki D."/>
            <person name="Tomaru Y."/>
            <person name="Fukuda S."/>
            <person name="Kanamori-Katayama M."/>
            <person name="Suzuki M."/>
            <person name="Aoki J."/>
            <person name="Arakawa T."/>
            <person name="Iida J."/>
            <person name="Imamura K."/>
            <person name="Itoh M."/>
            <person name="Kato T."/>
            <person name="Kawaji H."/>
            <person name="Kawagashira N."/>
            <person name="Kawashima T."/>
            <person name="Kojima M."/>
            <person name="Kondo S."/>
            <person name="Konno H."/>
            <person name="Nakano K."/>
            <person name="Ninomiya N."/>
            <person name="Nishio T."/>
            <person name="Okada M."/>
            <person name="Plessy C."/>
            <person name="Shibata K."/>
            <person name="Shiraki T."/>
            <person name="Suzuki S."/>
            <person name="Tagami M."/>
            <person name="Waki K."/>
            <person name="Watahiki A."/>
            <person name="Okamura-Oho Y."/>
            <person name="Suzuki H."/>
            <person name="Kawai J."/>
            <person name="Hayashizaki Y."/>
        </authorList>
    </citation>
    <scope>NUCLEOTIDE SEQUENCE [LARGE SCALE MRNA]</scope>
    <source>
        <strain>C57BL/6J</strain>
        <tissue>Cerebellum</tissue>
        <tissue>Head</tissue>
        <tissue>Lung</tissue>
        <tissue>Mesonephros</tissue>
        <tissue>Testis</tissue>
    </source>
</reference>
<reference key="3">
    <citation type="submission" date="1999-05" db="EMBL/GenBank/DDBJ databases">
        <title>Mus musculus sphingosine 1-phosphate receptor Edg3 gene, complete.</title>
        <authorList>
            <person name="Ohta K."/>
            <person name="Wada A."/>
            <person name="Igarashi Y."/>
        </authorList>
    </citation>
    <scope>NUCLEOTIDE SEQUENCE [MRNA]</scope>
</reference>
<reference key="4">
    <citation type="journal article" date="2004" name="Genome Res.">
        <title>The status, quality, and expansion of the NIH full-length cDNA project: the Mammalian Gene Collection (MGC).</title>
        <authorList>
            <consortium name="The MGC Project Team"/>
        </authorList>
    </citation>
    <scope>NUCLEOTIDE SEQUENCE [LARGE SCALE MRNA]</scope>
    <source>
        <strain>C57BL/6J</strain>
        <tissue>Bone</tissue>
        <tissue>Eye</tissue>
    </source>
</reference>
<sequence length="378" mass="42270">MATTHAQGHQPVLGNDTLREHYDYVGKLAGRLRDPPEGGTLITTILFLVTCSFIVLENLMVLIAIWKNNKFHNRMYFFIGNLALCDLLAGIAYKVNILMSGRKTFSLSPTVWFLREGSMFVALGASTCSLLAIAIERHLTMIKMRPYDANKKHRVFLLIGMCWLIAFSLGALPILGWNCLENFPDCSTILPLYSKKYIAFLISIFTAILVTIVILYARIYCLVKSSSRRVANHNSERSMALLRTVVIVVSVFIACWSPLFILFLIDVACRAKECSILFKSQWFIMLAVLNSAMNPVIYTLASKEMRRAFFRLVCGCLVKGKGTQASPMQPALDPSRSKSSSSNNSSHSPKVKEDLPRVATSSCIIDKNRSFQNGVLCK</sequence>
<dbReference type="EMBL" id="AF108021">
    <property type="protein sequence ID" value="AAD16977.1"/>
    <property type="molecule type" value="Genomic_DNA"/>
</dbReference>
<dbReference type="EMBL" id="AK028043">
    <property type="protein sequence ID" value="BAC25715.1"/>
    <property type="molecule type" value="mRNA"/>
</dbReference>
<dbReference type="EMBL" id="AK029852">
    <property type="protein sequence ID" value="BAC26645.1"/>
    <property type="molecule type" value="mRNA"/>
</dbReference>
<dbReference type="EMBL" id="AK030134">
    <property type="protein sequence ID" value="BAC26800.1"/>
    <property type="molecule type" value="mRNA"/>
</dbReference>
<dbReference type="EMBL" id="AK047268">
    <property type="protein sequence ID" value="BAC33008.1"/>
    <property type="molecule type" value="mRNA"/>
</dbReference>
<dbReference type="EMBL" id="AK081919">
    <property type="protein sequence ID" value="BAC38373.1"/>
    <property type="molecule type" value="mRNA"/>
</dbReference>
<dbReference type="EMBL" id="AK084944">
    <property type="protein sequence ID" value="BAC39316.1"/>
    <property type="molecule type" value="mRNA"/>
</dbReference>
<dbReference type="EMBL" id="AK085180">
    <property type="protein sequence ID" value="BAC39383.1"/>
    <property type="molecule type" value="mRNA"/>
</dbReference>
<dbReference type="EMBL" id="AK078443">
    <property type="protein sequence ID" value="BAC37277.1"/>
    <property type="molecule type" value="mRNA"/>
</dbReference>
<dbReference type="EMBL" id="AB028143">
    <property type="protein sequence ID" value="BAA78207.1"/>
    <property type="molecule type" value="mRNA"/>
</dbReference>
<dbReference type="EMBL" id="BC064007">
    <property type="protein sequence ID" value="AAH64007.1"/>
    <property type="molecule type" value="mRNA"/>
</dbReference>
<dbReference type="EMBL" id="BC068176">
    <property type="protein sequence ID" value="AAH68176.1"/>
    <property type="molecule type" value="mRNA"/>
</dbReference>
<dbReference type="CCDS" id="CCDS26512.1"/>
<dbReference type="RefSeq" id="NP_034231.1">
    <property type="nucleotide sequence ID" value="NM_010101.4"/>
</dbReference>
<dbReference type="SMR" id="Q9Z0U9"/>
<dbReference type="CORUM" id="Q9Z0U9"/>
<dbReference type="FunCoup" id="Q9Z0U9">
    <property type="interactions" value="1506"/>
</dbReference>
<dbReference type="STRING" id="10090.ENSMUSP00000085293"/>
<dbReference type="GuidetoPHARMACOLOGY" id="277"/>
<dbReference type="GlyCosmos" id="Q9Z0U9">
    <property type="glycosylation" value="1 site, No reported glycans"/>
</dbReference>
<dbReference type="GlyGen" id="Q9Z0U9">
    <property type="glycosylation" value="1 site, 1 N-linked glycan (1 site)"/>
</dbReference>
<dbReference type="iPTMnet" id="Q9Z0U9"/>
<dbReference type="PhosphoSitePlus" id="Q9Z0U9"/>
<dbReference type="PaxDb" id="10090-ENSMUSP00000085293"/>
<dbReference type="ProteomicsDB" id="256861"/>
<dbReference type="Pumba" id="Q9Z0U9"/>
<dbReference type="Antibodypedia" id="13485">
    <property type="antibodies" value="546 antibodies from 36 providers"/>
</dbReference>
<dbReference type="DNASU" id="13610"/>
<dbReference type="Ensembl" id="ENSMUST00000087978.5">
    <property type="protein sequence ID" value="ENSMUSP00000085293.4"/>
    <property type="gene ID" value="ENSMUSG00000067586.5"/>
</dbReference>
<dbReference type="GeneID" id="13610"/>
<dbReference type="KEGG" id="mmu:13610"/>
<dbReference type="UCSC" id="uc007qmf.2">
    <property type="organism name" value="mouse"/>
</dbReference>
<dbReference type="AGR" id="MGI:1339365"/>
<dbReference type="CTD" id="1903"/>
<dbReference type="MGI" id="MGI:1339365">
    <property type="gene designation" value="S1pr3"/>
</dbReference>
<dbReference type="VEuPathDB" id="HostDB:ENSMUSG00000067586"/>
<dbReference type="eggNOG" id="ENOG502R61K">
    <property type="taxonomic scope" value="Eukaryota"/>
</dbReference>
<dbReference type="GeneTree" id="ENSGT01050000244887"/>
<dbReference type="HOGENOM" id="CLU_047979_1_0_1"/>
<dbReference type="InParanoid" id="Q9Z0U9"/>
<dbReference type="OMA" id="LYTKKYV"/>
<dbReference type="OrthoDB" id="9874984at2759"/>
<dbReference type="PhylomeDB" id="Q9Z0U9"/>
<dbReference type="TreeFam" id="TF330052"/>
<dbReference type="Reactome" id="R-MMU-418594">
    <property type="pathway name" value="G alpha (i) signalling events"/>
</dbReference>
<dbReference type="Reactome" id="R-MMU-419408">
    <property type="pathway name" value="Lysosphingolipid and LPA receptors"/>
</dbReference>
<dbReference type="Reactome" id="R-MMU-9009391">
    <property type="pathway name" value="Extra-nuclear estrogen signaling"/>
</dbReference>
<dbReference type="BioGRID-ORCS" id="13610">
    <property type="hits" value="1 hit in 78 CRISPR screens"/>
</dbReference>
<dbReference type="ChiTaRS" id="S1pr3">
    <property type="organism name" value="mouse"/>
</dbReference>
<dbReference type="PRO" id="PR:Q9Z0U9"/>
<dbReference type="Proteomes" id="UP000000589">
    <property type="component" value="Chromosome 13"/>
</dbReference>
<dbReference type="RNAct" id="Q9Z0U9">
    <property type="molecule type" value="protein"/>
</dbReference>
<dbReference type="Bgee" id="ENSMUSG00000067586">
    <property type="expression patterns" value="Expressed in internal carotid artery and 236 other cell types or tissues"/>
</dbReference>
<dbReference type="GO" id="GO:0005886">
    <property type="term" value="C:plasma membrane"/>
    <property type="evidence" value="ECO:0000304"/>
    <property type="project" value="MGI"/>
</dbReference>
<dbReference type="GO" id="GO:0098793">
    <property type="term" value="C:presynapse"/>
    <property type="evidence" value="ECO:0000314"/>
    <property type="project" value="SynGO"/>
</dbReference>
<dbReference type="GO" id="GO:0004930">
    <property type="term" value="F:G protein-coupled receptor activity"/>
    <property type="evidence" value="ECO:0000304"/>
    <property type="project" value="MGI"/>
</dbReference>
<dbReference type="GO" id="GO:0005178">
    <property type="term" value="F:integrin binding"/>
    <property type="evidence" value="ECO:0007669"/>
    <property type="project" value="Ensembl"/>
</dbReference>
<dbReference type="GO" id="GO:0038036">
    <property type="term" value="F:sphingosine-1-phosphate receptor activity"/>
    <property type="evidence" value="ECO:0007669"/>
    <property type="project" value="InterPro"/>
</dbReference>
<dbReference type="GO" id="GO:0007193">
    <property type="term" value="P:adenylate cyclase-inhibiting G protein-coupled receptor signaling pathway"/>
    <property type="evidence" value="ECO:0000314"/>
    <property type="project" value="MGI"/>
</dbReference>
<dbReference type="GO" id="GO:0006954">
    <property type="term" value="P:inflammatory response"/>
    <property type="evidence" value="ECO:0000315"/>
    <property type="project" value="MGI"/>
</dbReference>
<dbReference type="GO" id="GO:1903141">
    <property type="term" value="P:negative regulation of establishment of endothelial barrier"/>
    <property type="evidence" value="ECO:0007669"/>
    <property type="project" value="Ensembl"/>
</dbReference>
<dbReference type="GO" id="GO:0007219">
    <property type="term" value="P:Notch signaling pathway"/>
    <property type="evidence" value="ECO:0000314"/>
    <property type="project" value="MGI"/>
</dbReference>
<dbReference type="GO" id="GO:0032651">
    <property type="term" value="P:regulation of interleukin-1 beta production"/>
    <property type="evidence" value="ECO:0000315"/>
    <property type="project" value="MGI"/>
</dbReference>
<dbReference type="CDD" id="cd15345">
    <property type="entry name" value="7tmA_S1PR3_Edg3"/>
    <property type="match status" value="1"/>
</dbReference>
<dbReference type="FunFam" id="1.20.1070.10:FF:000098">
    <property type="entry name" value="Sphingosine 1-phosphate receptor 1"/>
    <property type="match status" value="1"/>
</dbReference>
<dbReference type="Gene3D" id="1.20.1070.10">
    <property type="entry name" value="Rhodopsin 7-helix transmembrane proteins"/>
    <property type="match status" value="1"/>
</dbReference>
<dbReference type="InterPro" id="IPR004062">
    <property type="entry name" value="EDG3_rcpt"/>
</dbReference>
<dbReference type="InterPro" id="IPR000276">
    <property type="entry name" value="GPCR_Rhodpsn"/>
</dbReference>
<dbReference type="InterPro" id="IPR017452">
    <property type="entry name" value="GPCR_Rhodpsn_7TM"/>
</dbReference>
<dbReference type="InterPro" id="IPR004061">
    <property type="entry name" value="S1P_rcpt"/>
</dbReference>
<dbReference type="PANTHER" id="PTHR22750">
    <property type="entry name" value="G-PROTEIN COUPLED RECEPTOR"/>
    <property type="match status" value="1"/>
</dbReference>
<dbReference type="Pfam" id="PF00001">
    <property type="entry name" value="7tm_1"/>
    <property type="match status" value="1"/>
</dbReference>
<dbReference type="PRINTS" id="PR01524">
    <property type="entry name" value="EDG3RECEPTOR"/>
</dbReference>
<dbReference type="PRINTS" id="PR00237">
    <property type="entry name" value="GPCRRHODOPSN"/>
</dbReference>
<dbReference type="PRINTS" id="PR01523">
    <property type="entry name" value="S1PRECEPTOR"/>
</dbReference>
<dbReference type="SMART" id="SM01381">
    <property type="entry name" value="7TM_GPCR_Srsx"/>
    <property type="match status" value="1"/>
</dbReference>
<dbReference type="SUPFAM" id="SSF81321">
    <property type="entry name" value="Family A G protein-coupled receptor-like"/>
    <property type="match status" value="1"/>
</dbReference>
<dbReference type="PROSITE" id="PS00237">
    <property type="entry name" value="G_PROTEIN_RECEP_F1_1"/>
    <property type="match status" value="1"/>
</dbReference>
<dbReference type="PROSITE" id="PS50262">
    <property type="entry name" value="G_PROTEIN_RECEP_F1_2"/>
    <property type="match status" value="1"/>
</dbReference>
<comment type="function">
    <text>Receptor for the lysosphingolipid sphingosine 1-phosphate (S1P). S1P is a bioactive lysophospholipid that elicits diverse physiological effect on most types of cells and tissues.</text>
</comment>
<comment type="subcellular location">
    <subcellularLocation>
        <location>Cell membrane</location>
        <topology>Multi-pass membrane protein</topology>
    </subcellularLocation>
</comment>
<comment type="tissue specificity">
    <text evidence="6">Most abundant in heart, lung, kidney and spleen; low but detectable in brain, thymus, muscle and testis; and nearly undetectable in liver, stomach, and intestine. Expressed in embryonic lung from embryonic day 14-18. Also abundantly detected in embryonic nasal cartilage, sphenoid bone, vena cava, Meckel's cartilage/incisor teeth, genital tubercle and bladder.</text>
</comment>
<comment type="similarity">
    <text evidence="4">Belongs to the G-protein coupled receptor 1 family.</text>
</comment>
<feature type="chain" id="PRO_0000069422" description="Sphingosine 1-phosphate receptor 3">
    <location>
        <begin position="1"/>
        <end position="378"/>
    </location>
</feature>
<feature type="topological domain" description="Extracellular" evidence="1">
    <location>
        <begin position="1"/>
        <end position="44"/>
    </location>
</feature>
<feature type="transmembrane region" description="Helical; Name=1" evidence="1">
    <location>
        <begin position="45"/>
        <end position="65"/>
    </location>
</feature>
<feature type="topological domain" description="Cytoplasmic" evidence="1">
    <location>
        <begin position="66"/>
        <end position="74"/>
    </location>
</feature>
<feature type="transmembrane region" description="Helical; Name=2" evidence="1">
    <location>
        <begin position="75"/>
        <end position="95"/>
    </location>
</feature>
<feature type="topological domain" description="Extracellular" evidence="1">
    <location>
        <begin position="96"/>
        <end position="115"/>
    </location>
</feature>
<feature type="transmembrane region" description="Helical; Name=3" evidence="1">
    <location>
        <begin position="116"/>
        <end position="136"/>
    </location>
</feature>
<feature type="topological domain" description="Cytoplasmic" evidence="1">
    <location>
        <begin position="137"/>
        <end position="154"/>
    </location>
</feature>
<feature type="transmembrane region" description="Helical; Name=4" evidence="1">
    <location>
        <begin position="155"/>
        <end position="175"/>
    </location>
</feature>
<feature type="topological domain" description="Extracellular" evidence="1">
    <location>
        <begin position="176"/>
        <end position="196"/>
    </location>
</feature>
<feature type="transmembrane region" description="Helical; Name=5" evidence="1">
    <location>
        <begin position="197"/>
        <end position="217"/>
    </location>
</feature>
<feature type="topological domain" description="Cytoplasmic" evidence="1">
    <location>
        <begin position="218"/>
        <end position="244"/>
    </location>
</feature>
<feature type="transmembrane region" description="Helical; Name=6" evidence="1">
    <location>
        <begin position="245"/>
        <end position="265"/>
    </location>
</feature>
<feature type="topological domain" description="Extracellular" evidence="1">
    <location>
        <begin position="266"/>
        <end position="281"/>
    </location>
</feature>
<feature type="transmembrane region" description="Helical; Name=7" evidence="1">
    <location>
        <begin position="282"/>
        <end position="302"/>
    </location>
</feature>
<feature type="topological domain" description="Cytoplasmic" evidence="1">
    <location>
        <begin position="303"/>
        <end position="378"/>
    </location>
</feature>
<feature type="region of interest" description="Disordered" evidence="5">
    <location>
        <begin position="323"/>
        <end position="354"/>
    </location>
</feature>
<feature type="compositionally biased region" description="Low complexity" evidence="5">
    <location>
        <begin position="337"/>
        <end position="348"/>
    </location>
</feature>
<feature type="modified residue" description="Phosphoserine" evidence="2">
    <location>
        <position position="326"/>
    </location>
</feature>
<feature type="glycosylation site" description="N-linked (GlcNAc...) asparagine" evidence="3">
    <location>
        <position position="15"/>
    </location>
</feature>
<feature type="sequence conflict" description="In Ref. 2; BAC37277." evidence="7" ref="2">
    <original>S</original>
    <variation>R</variation>
    <location>
        <position position="106"/>
    </location>
</feature>
<organism>
    <name type="scientific">Mus musculus</name>
    <name type="common">Mouse</name>
    <dbReference type="NCBI Taxonomy" id="10090"/>
    <lineage>
        <taxon>Eukaryota</taxon>
        <taxon>Metazoa</taxon>
        <taxon>Chordata</taxon>
        <taxon>Craniata</taxon>
        <taxon>Vertebrata</taxon>
        <taxon>Euteleostomi</taxon>
        <taxon>Mammalia</taxon>
        <taxon>Eutheria</taxon>
        <taxon>Euarchontoglires</taxon>
        <taxon>Glires</taxon>
        <taxon>Rodentia</taxon>
        <taxon>Myomorpha</taxon>
        <taxon>Muroidea</taxon>
        <taxon>Muridae</taxon>
        <taxon>Murinae</taxon>
        <taxon>Mus</taxon>
        <taxon>Mus</taxon>
    </lineage>
</organism>
<gene>
    <name type="primary">S1pr3</name>
    <name type="synonym">Edg3</name>
    <name type="synonym">Lpb3</name>
</gene>
<protein>
    <recommendedName>
        <fullName>Sphingosine 1-phosphate receptor 3</fullName>
        <shortName>S1P receptor 3</shortName>
        <shortName>S1P3</shortName>
    </recommendedName>
    <alternativeName>
        <fullName>Endothelial differentiation G-protein coupled receptor 3</fullName>
    </alternativeName>
    <alternativeName>
        <fullName>Lysophospholipid receptor B3</fullName>
    </alternativeName>
    <alternativeName>
        <fullName>Sphingosine 1-phosphate receptor Edg-3</fullName>
        <shortName>S1P receptor Edg-3</shortName>
    </alternativeName>
</protein>
<name>S1PR3_MOUSE</name>
<keyword id="KW-1003">Cell membrane</keyword>
<keyword id="KW-0297">G-protein coupled receptor</keyword>
<keyword id="KW-0325">Glycoprotein</keyword>
<keyword id="KW-0472">Membrane</keyword>
<keyword id="KW-0597">Phosphoprotein</keyword>
<keyword id="KW-0675">Receptor</keyword>
<keyword id="KW-1185">Reference proteome</keyword>
<keyword id="KW-0807">Transducer</keyword>
<keyword id="KW-0812">Transmembrane</keyword>
<keyword id="KW-1133">Transmembrane helix</keyword>
<proteinExistence type="evidence at transcript level"/>
<evidence type="ECO:0000250" key="1"/>
<evidence type="ECO:0000250" key="2">
    <source>
        <dbReference type="UniProtKB" id="Q99500"/>
    </source>
</evidence>
<evidence type="ECO:0000255" key="3"/>
<evidence type="ECO:0000255" key="4">
    <source>
        <dbReference type="PROSITE-ProRule" id="PRU00521"/>
    </source>
</evidence>
<evidence type="ECO:0000256" key="5">
    <source>
        <dbReference type="SAM" id="MobiDB-lite"/>
    </source>
</evidence>
<evidence type="ECO:0000269" key="6">
    <source>
    </source>
</evidence>
<evidence type="ECO:0000305" key="7"/>